<proteinExistence type="evidence at protein level"/>
<dbReference type="PIR" id="S01805">
    <property type="entry name" value="HBCOG"/>
</dbReference>
<dbReference type="PDB" id="3WR1">
    <property type="method" value="X-ray"/>
    <property type="resolution" value="3.50 A"/>
    <property type="chains" value="B=1-146"/>
</dbReference>
<dbReference type="PDBsum" id="3WR1"/>
<dbReference type="SMR" id="P10782"/>
<dbReference type="EvolutionaryTrace" id="P10782"/>
<dbReference type="GO" id="GO:0072562">
    <property type="term" value="C:blood microparticle"/>
    <property type="evidence" value="ECO:0007669"/>
    <property type="project" value="TreeGrafter"/>
</dbReference>
<dbReference type="GO" id="GO:0031838">
    <property type="term" value="C:haptoglobin-hemoglobin complex"/>
    <property type="evidence" value="ECO:0007669"/>
    <property type="project" value="TreeGrafter"/>
</dbReference>
<dbReference type="GO" id="GO:0005833">
    <property type="term" value="C:hemoglobin complex"/>
    <property type="evidence" value="ECO:0007669"/>
    <property type="project" value="InterPro"/>
</dbReference>
<dbReference type="GO" id="GO:0031720">
    <property type="term" value="F:haptoglobin binding"/>
    <property type="evidence" value="ECO:0007669"/>
    <property type="project" value="TreeGrafter"/>
</dbReference>
<dbReference type="GO" id="GO:0020037">
    <property type="term" value="F:heme binding"/>
    <property type="evidence" value="ECO:0007669"/>
    <property type="project" value="InterPro"/>
</dbReference>
<dbReference type="GO" id="GO:0046872">
    <property type="term" value="F:metal ion binding"/>
    <property type="evidence" value="ECO:0007669"/>
    <property type="project" value="UniProtKB-KW"/>
</dbReference>
<dbReference type="GO" id="GO:0043177">
    <property type="term" value="F:organic acid binding"/>
    <property type="evidence" value="ECO:0007669"/>
    <property type="project" value="TreeGrafter"/>
</dbReference>
<dbReference type="GO" id="GO:0019825">
    <property type="term" value="F:oxygen binding"/>
    <property type="evidence" value="ECO:0007669"/>
    <property type="project" value="InterPro"/>
</dbReference>
<dbReference type="GO" id="GO:0005344">
    <property type="term" value="F:oxygen carrier activity"/>
    <property type="evidence" value="ECO:0007669"/>
    <property type="project" value="UniProtKB-KW"/>
</dbReference>
<dbReference type="GO" id="GO:0004601">
    <property type="term" value="F:peroxidase activity"/>
    <property type="evidence" value="ECO:0007669"/>
    <property type="project" value="TreeGrafter"/>
</dbReference>
<dbReference type="GO" id="GO:0042744">
    <property type="term" value="P:hydrogen peroxide catabolic process"/>
    <property type="evidence" value="ECO:0007669"/>
    <property type="project" value="TreeGrafter"/>
</dbReference>
<dbReference type="CDD" id="cd08925">
    <property type="entry name" value="Hb-beta-like"/>
    <property type="match status" value="1"/>
</dbReference>
<dbReference type="FunFam" id="1.10.490.10:FF:000001">
    <property type="entry name" value="Hemoglobin subunit beta"/>
    <property type="match status" value="1"/>
</dbReference>
<dbReference type="Gene3D" id="1.10.490.10">
    <property type="entry name" value="Globins"/>
    <property type="match status" value="1"/>
</dbReference>
<dbReference type="InterPro" id="IPR000971">
    <property type="entry name" value="Globin"/>
</dbReference>
<dbReference type="InterPro" id="IPR009050">
    <property type="entry name" value="Globin-like_sf"/>
</dbReference>
<dbReference type="InterPro" id="IPR012292">
    <property type="entry name" value="Globin/Proto"/>
</dbReference>
<dbReference type="InterPro" id="IPR002337">
    <property type="entry name" value="Hemoglobin_b"/>
</dbReference>
<dbReference type="InterPro" id="IPR050056">
    <property type="entry name" value="Hemoglobin_oxygen_transport"/>
</dbReference>
<dbReference type="PANTHER" id="PTHR11442">
    <property type="entry name" value="HEMOGLOBIN FAMILY MEMBER"/>
    <property type="match status" value="1"/>
</dbReference>
<dbReference type="PANTHER" id="PTHR11442:SF7">
    <property type="entry name" value="HEMOGLOBIN SUBUNIT EPSILON"/>
    <property type="match status" value="1"/>
</dbReference>
<dbReference type="Pfam" id="PF00042">
    <property type="entry name" value="Globin"/>
    <property type="match status" value="1"/>
</dbReference>
<dbReference type="PRINTS" id="PR00814">
    <property type="entry name" value="BETAHAEM"/>
</dbReference>
<dbReference type="SUPFAM" id="SSF46458">
    <property type="entry name" value="Globin-like"/>
    <property type="match status" value="1"/>
</dbReference>
<dbReference type="PROSITE" id="PS01033">
    <property type="entry name" value="GLOBIN"/>
    <property type="match status" value="1"/>
</dbReference>
<gene>
    <name type="primary">HBB</name>
</gene>
<keyword id="KW-0002">3D-structure</keyword>
<keyword id="KW-0903">Direct protein sequencing</keyword>
<keyword id="KW-0349">Heme</keyword>
<keyword id="KW-0408">Iron</keyword>
<keyword id="KW-0479">Metal-binding</keyword>
<keyword id="KW-0561">Oxygen transport</keyword>
<keyword id="KW-0813">Transport</keyword>
<accession>P10782</accession>
<reference key="1">
    <citation type="journal article" date="1988" name="Biol. Chem. Hoppe-Seyler">
        <title>The primary structure of the hemoglobin of the Cormorant (Phalacrocorax carbo, Pelecaniformes).</title>
        <authorList>
            <person name="Huber K."/>
            <person name="Braunitzer G."/>
            <person name="Schneeganss D."/>
            <person name="Kosters J."/>
            <person name="Grimm F."/>
        </authorList>
    </citation>
    <scope>PROTEIN SEQUENCE</scope>
</reference>
<feature type="chain" id="PRO_0000053066" description="Hemoglobin subunit beta">
    <location>
        <begin position="1"/>
        <end position="146"/>
    </location>
</feature>
<feature type="domain" description="Globin" evidence="1">
    <location>
        <begin position="2"/>
        <end position="146"/>
    </location>
</feature>
<feature type="binding site" description="distal binding residue">
    <location>
        <position position="63"/>
    </location>
    <ligand>
        <name>heme b</name>
        <dbReference type="ChEBI" id="CHEBI:60344"/>
    </ligand>
    <ligandPart>
        <name>Fe</name>
        <dbReference type="ChEBI" id="CHEBI:18248"/>
    </ligandPart>
</feature>
<feature type="binding site" description="proximal binding residue">
    <location>
        <position position="92"/>
    </location>
    <ligand>
        <name>heme b</name>
        <dbReference type="ChEBI" id="CHEBI:60344"/>
    </ligand>
    <ligandPart>
        <name>Fe</name>
        <dbReference type="ChEBI" id="CHEBI:18248"/>
    </ligandPart>
</feature>
<feature type="helix" evidence="2">
    <location>
        <begin position="5"/>
        <end position="16"/>
    </location>
</feature>
<feature type="helix" evidence="2">
    <location>
        <begin position="20"/>
        <end position="34"/>
    </location>
</feature>
<feature type="helix" evidence="2">
    <location>
        <begin position="36"/>
        <end position="45"/>
    </location>
</feature>
<feature type="helix" evidence="2">
    <location>
        <begin position="51"/>
        <end position="54"/>
    </location>
</feature>
<feature type="helix" evidence="2">
    <location>
        <begin position="58"/>
        <end position="76"/>
    </location>
</feature>
<feature type="helix" evidence="2">
    <location>
        <begin position="78"/>
        <end position="80"/>
    </location>
</feature>
<feature type="helix" evidence="2">
    <location>
        <begin position="81"/>
        <end position="84"/>
    </location>
</feature>
<feature type="helix" evidence="2">
    <location>
        <begin position="86"/>
        <end position="93"/>
    </location>
</feature>
<feature type="helix" evidence="2">
    <location>
        <begin position="101"/>
        <end position="118"/>
    </location>
</feature>
<feature type="helix" evidence="2">
    <location>
        <begin position="119"/>
        <end position="121"/>
    </location>
</feature>
<feature type="helix" evidence="2">
    <location>
        <begin position="124"/>
        <end position="142"/>
    </location>
</feature>
<organism>
    <name type="scientific">Phalacrocorax carbo</name>
    <name type="common">Great cormorant</name>
    <name type="synonym">Pelecanus carbo</name>
    <dbReference type="NCBI Taxonomy" id="9209"/>
    <lineage>
        <taxon>Eukaryota</taxon>
        <taxon>Metazoa</taxon>
        <taxon>Chordata</taxon>
        <taxon>Craniata</taxon>
        <taxon>Vertebrata</taxon>
        <taxon>Euteleostomi</taxon>
        <taxon>Archelosauria</taxon>
        <taxon>Archosauria</taxon>
        <taxon>Dinosauria</taxon>
        <taxon>Saurischia</taxon>
        <taxon>Theropoda</taxon>
        <taxon>Coelurosauria</taxon>
        <taxon>Aves</taxon>
        <taxon>Neognathae</taxon>
        <taxon>Neoaves</taxon>
        <taxon>Aequornithes</taxon>
        <taxon>Suliformes</taxon>
        <taxon>Phalacrocoracidae</taxon>
        <taxon>Phalacrocorax</taxon>
    </lineage>
</organism>
<protein>
    <recommendedName>
        <fullName>Hemoglobin subunit beta</fullName>
    </recommendedName>
    <alternativeName>
        <fullName>Beta-globin</fullName>
    </alternativeName>
    <alternativeName>
        <fullName>Hemoglobin beta chain</fullName>
    </alternativeName>
</protein>
<name>HBB_PHACA</name>
<comment type="function">
    <text>Involved in oxygen transport from the lung to the various peripheral tissues.</text>
</comment>
<comment type="subunit">
    <text>Heterotetramer of two alpha chains and two beta chains.</text>
</comment>
<comment type="tissue specificity">
    <text>Red blood cells.</text>
</comment>
<comment type="miscellaneous">
    <text>In pos. 135 of beta chain, other birds usually have Arg (the positively charged AA contributes to the formation of the phosphate-binding site). Here the non-polar Gly reduced phosphate interactions, and oxygen affinity increased.</text>
</comment>
<comment type="similarity">
    <text evidence="1">Belongs to the globin family.</text>
</comment>
<sequence>VHWTAEEKQLITGLWGKVNVAECGAEALARLLIVYPWTQRFFASFGNLSSATAITGNPMVRAHGKKVLTSFGEAVKNLDNIKATFAQLSELHCDKLHVDPENFRLLGDILIIVLAAHFAKDFTPECQAAWQKLVGAVAHALARKYH</sequence>
<evidence type="ECO:0000255" key="1">
    <source>
        <dbReference type="PROSITE-ProRule" id="PRU00238"/>
    </source>
</evidence>
<evidence type="ECO:0007829" key="2">
    <source>
        <dbReference type="PDB" id="3WR1"/>
    </source>
</evidence>